<dbReference type="EMBL" id="Y07640">
    <property type="protein sequence ID" value="CAA68920.1"/>
    <property type="molecule type" value="Genomic_DNA"/>
</dbReference>
<dbReference type="EMBL" id="AL591981">
    <property type="protein sequence ID" value="CAC99863.1"/>
    <property type="molecule type" value="Genomic_DNA"/>
</dbReference>
<dbReference type="PIR" id="AI1297">
    <property type="entry name" value="AI1297"/>
</dbReference>
<dbReference type="RefSeq" id="NP_465310.1">
    <property type="nucleotide sequence ID" value="NC_003210.1"/>
</dbReference>
<dbReference type="RefSeq" id="WP_010958948.1">
    <property type="nucleotide sequence ID" value="NZ_CP149495.1"/>
</dbReference>
<dbReference type="SMR" id="P0A3L1"/>
<dbReference type="STRING" id="169963.gene:17594470"/>
<dbReference type="PaxDb" id="169963-lmo1785"/>
<dbReference type="EnsemblBacteria" id="CAC99863">
    <property type="protein sequence ID" value="CAC99863"/>
    <property type="gene ID" value="CAC99863"/>
</dbReference>
<dbReference type="GeneID" id="93239694"/>
<dbReference type="GeneID" id="985947"/>
<dbReference type="KEGG" id="lmo:lmo1785"/>
<dbReference type="PATRIC" id="fig|169963.11.peg.1829"/>
<dbReference type="eggNOG" id="COG0290">
    <property type="taxonomic scope" value="Bacteria"/>
</dbReference>
<dbReference type="HOGENOM" id="CLU_054919_3_2_9"/>
<dbReference type="OrthoDB" id="9806014at2"/>
<dbReference type="PhylomeDB" id="P0A3L1"/>
<dbReference type="BioCyc" id="LMON169963:LMO1785-MONOMER"/>
<dbReference type="Proteomes" id="UP000000817">
    <property type="component" value="Chromosome"/>
</dbReference>
<dbReference type="GO" id="GO:0005829">
    <property type="term" value="C:cytosol"/>
    <property type="evidence" value="ECO:0000318"/>
    <property type="project" value="GO_Central"/>
</dbReference>
<dbReference type="GO" id="GO:0043022">
    <property type="term" value="F:ribosome binding"/>
    <property type="evidence" value="ECO:0000318"/>
    <property type="project" value="GO_Central"/>
</dbReference>
<dbReference type="GO" id="GO:0003743">
    <property type="term" value="F:translation initiation factor activity"/>
    <property type="evidence" value="ECO:0000318"/>
    <property type="project" value="GO_Central"/>
</dbReference>
<dbReference type="GO" id="GO:0032790">
    <property type="term" value="P:ribosome disassembly"/>
    <property type="evidence" value="ECO:0000318"/>
    <property type="project" value="GO_Central"/>
</dbReference>
<dbReference type="FunFam" id="3.10.20.80:FF:000001">
    <property type="entry name" value="Translation initiation factor IF-3"/>
    <property type="match status" value="1"/>
</dbReference>
<dbReference type="FunFam" id="3.30.110.10:FF:000001">
    <property type="entry name" value="Translation initiation factor IF-3"/>
    <property type="match status" value="1"/>
</dbReference>
<dbReference type="Gene3D" id="3.30.110.10">
    <property type="entry name" value="Translation initiation factor 3 (IF-3), C-terminal domain"/>
    <property type="match status" value="1"/>
</dbReference>
<dbReference type="Gene3D" id="3.10.20.80">
    <property type="entry name" value="Translation initiation factor 3 (IF-3), N-terminal domain"/>
    <property type="match status" value="1"/>
</dbReference>
<dbReference type="HAMAP" id="MF_00080">
    <property type="entry name" value="IF_3"/>
    <property type="match status" value="1"/>
</dbReference>
<dbReference type="InterPro" id="IPR036788">
    <property type="entry name" value="T_IF-3_C_sf"/>
</dbReference>
<dbReference type="InterPro" id="IPR036787">
    <property type="entry name" value="T_IF-3_N_sf"/>
</dbReference>
<dbReference type="InterPro" id="IPR019813">
    <property type="entry name" value="Translation_initiation_fac3_CS"/>
</dbReference>
<dbReference type="InterPro" id="IPR001288">
    <property type="entry name" value="Translation_initiation_fac_3"/>
</dbReference>
<dbReference type="InterPro" id="IPR019815">
    <property type="entry name" value="Translation_initiation_fac_3_C"/>
</dbReference>
<dbReference type="InterPro" id="IPR019814">
    <property type="entry name" value="Translation_initiation_fac_3_N"/>
</dbReference>
<dbReference type="NCBIfam" id="TIGR00168">
    <property type="entry name" value="infC"/>
    <property type="match status" value="1"/>
</dbReference>
<dbReference type="PANTHER" id="PTHR10938">
    <property type="entry name" value="TRANSLATION INITIATION FACTOR IF-3"/>
    <property type="match status" value="1"/>
</dbReference>
<dbReference type="PANTHER" id="PTHR10938:SF0">
    <property type="entry name" value="TRANSLATION INITIATION FACTOR IF-3, MITOCHONDRIAL"/>
    <property type="match status" value="1"/>
</dbReference>
<dbReference type="Pfam" id="PF00707">
    <property type="entry name" value="IF3_C"/>
    <property type="match status" value="1"/>
</dbReference>
<dbReference type="Pfam" id="PF05198">
    <property type="entry name" value="IF3_N"/>
    <property type="match status" value="1"/>
</dbReference>
<dbReference type="SUPFAM" id="SSF55200">
    <property type="entry name" value="Translation initiation factor IF3, C-terminal domain"/>
    <property type="match status" value="1"/>
</dbReference>
<dbReference type="SUPFAM" id="SSF54364">
    <property type="entry name" value="Translation initiation factor IF3, N-terminal domain"/>
    <property type="match status" value="1"/>
</dbReference>
<dbReference type="PROSITE" id="PS00938">
    <property type="entry name" value="IF3"/>
    <property type="match status" value="1"/>
</dbReference>
<organism>
    <name type="scientific">Listeria monocytogenes serovar 1/2a (strain ATCC BAA-679 / EGD-e)</name>
    <dbReference type="NCBI Taxonomy" id="169963"/>
    <lineage>
        <taxon>Bacteria</taxon>
        <taxon>Bacillati</taxon>
        <taxon>Bacillota</taxon>
        <taxon>Bacilli</taxon>
        <taxon>Bacillales</taxon>
        <taxon>Listeriaceae</taxon>
        <taxon>Listeria</taxon>
    </lineage>
</organism>
<gene>
    <name evidence="1" type="primary">infC</name>
    <name type="ordered locus">lmo1785</name>
</gene>
<accession>P0A3L1</accession>
<accession>O53084</accession>
<accession>Q9EUW3</accession>
<protein>
    <recommendedName>
        <fullName evidence="1">Translation initiation factor IF-3</fullName>
    </recommendedName>
</protein>
<reference key="1">
    <citation type="journal article" date="1998" name="Mol. Gen. Genet.">
        <title>Sequence comparison of the chromosomal regions encompassing the internalin C genes (inlC) of Listeria monocytogenes and L. ivanovii.</title>
        <authorList>
            <person name="Engelbrecht F."/>
            <person name="Dickneite C."/>
            <person name="Lampidis R."/>
            <person name="Goetz M."/>
            <person name="Dasgupta U."/>
            <person name="Goebel W."/>
        </authorList>
    </citation>
    <scope>NUCLEOTIDE SEQUENCE [GENOMIC DNA]</scope>
    <source>
        <strain>EGD / Serovar 1/2a</strain>
    </source>
</reference>
<reference key="2">
    <citation type="journal article" date="2001" name="Science">
        <title>Comparative genomics of Listeria species.</title>
        <authorList>
            <person name="Glaser P."/>
            <person name="Frangeul L."/>
            <person name="Buchrieser C."/>
            <person name="Rusniok C."/>
            <person name="Amend A."/>
            <person name="Baquero F."/>
            <person name="Berche P."/>
            <person name="Bloecker H."/>
            <person name="Brandt P."/>
            <person name="Chakraborty T."/>
            <person name="Charbit A."/>
            <person name="Chetouani F."/>
            <person name="Couve E."/>
            <person name="de Daruvar A."/>
            <person name="Dehoux P."/>
            <person name="Domann E."/>
            <person name="Dominguez-Bernal G."/>
            <person name="Duchaud E."/>
            <person name="Durant L."/>
            <person name="Dussurget O."/>
            <person name="Entian K.-D."/>
            <person name="Fsihi H."/>
            <person name="Garcia-del Portillo F."/>
            <person name="Garrido P."/>
            <person name="Gautier L."/>
            <person name="Goebel W."/>
            <person name="Gomez-Lopez N."/>
            <person name="Hain T."/>
            <person name="Hauf J."/>
            <person name="Jackson D."/>
            <person name="Jones L.-M."/>
            <person name="Kaerst U."/>
            <person name="Kreft J."/>
            <person name="Kuhn M."/>
            <person name="Kunst F."/>
            <person name="Kurapkat G."/>
            <person name="Madueno E."/>
            <person name="Maitournam A."/>
            <person name="Mata Vicente J."/>
            <person name="Ng E."/>
            <person name="Nedjari H."/>
            <person name="Nordsiek G."/>
            <person name="Novella S."/>
            <person name="de Pablos B."/>
            <person name="Perez-Diaz J.-C."/>
            <person name="Purcell R."/>
            <person name="Remmel B."/>
            <person name="Rose M."/>
            <person name="Schlueter T."/>
            <person name="Simoes N."/>
            <person name="Tierrez A."/>
            <person name="Vazquez-Boland J.-A."/>
            <person name="Voss H."/>
            <person name="Wehland J."/>
            <person name="Cossart P."/>
        </authorList>
    </citation>
    <scope>NUCLEOTIDE SEQUENCE [LARGE SCALE GENOMIC DNA]</scope>
    <source>
        <strain>ATCC BAA-679 / EGD-e</strain>
    </source>
</reference>
<evidence type="ECO:0000255" key="1">
    <source>
        <dbReference type="HAMAP-Rule" id="MF_00080"/>
    </source>
</evidence>
<sequence length="171" mass="19647">MSKDMLVNDGIRAREVRLIDQDGEQLGVKSKIDALQIAEKANLDLVLVAPTAKPPVARIMDYGKFRFEQQKKDKEARKNQKVIVMKEVRLSPTIDEHDFDTKLRNARKFLEKGDKVKCSIRFKGRAITHKEIGQKVLDRFAKACEDLCTIEQRPKMDGRSMFLVLAPLHEK</sequence>
<proteinExistence type="inferred from homology"/>
<feature type="chain" id="PRO_0000177538" description="Translation initiation factor IF-3">
    <location>
        <begin position="1"/>
        <end position="171"/>
    </location>
</feature>
<name>IF3_LISMO</name>
<comment type="function">
    <text evidence="1">IF-3 binds to the 30S ribosomal subunit and shifts the equilibrium between 70S ribosomes and their 50S and 30S subunits in favor of the free subunits, thus enhancing the availability of 30S subunits on which protein synthesis initiation begins.</text>
</comment>
<comment type="subunit">
    <text evidence="1">Monomer.</text>
</comment>
<comment type="subcellular location">
    <subcellularLocation>
        <location evidence="1">Cytoplasm</location>
    </subcellularLocation>
</comment>
<comment type="similarity">
    <text evidence="1">Belongs to the IF-3 family.</text>
</comment>
<keyword id="KW-0963">Cytoplasm</keyword>
<keyword id="KW-0396">Initiation factor</keyword>
<keyword id="KW-0648">Protein biosynthesis</keyword>
<keyword id="KW-1185">Reference proteome</keyword>